<feature type="signal peptide" evidence="3">
    <location>
        <begin position="1"/>
        <end position="29"/>
    </location>
</feature>
<feature type="chain" id="PRO_0000008421" description="Ero1-like protein">
    <location>
        <begin position="30"/>
        <end position="483"/>
    </location>
</feature>
<feature type="binding site" evidence="2">
    <location>
        <position position="206"/>
    </location>
    <ligand>
        <name>FAD</name>
        <dbReference type="ChEBI" id="CHEBI:57692"/>
    </ligand>
</feature>
<feature type="binding site" evidence="2">
    <location>
        <position position="208"/>
    </location>
    <ligand>
        <name>FAD</name>
        <dbReference type="ChEBI" id="CHEBI:57692"/>
    </ligand>
</feature>
<feature type="binding site" evidence="2">
    <location>
        <position position="219"/>
    </location>
    <ligand>
        <name>FAD</name>
        <dbReference type="ChEBI" id="CHEBI:57692"/>
    </ligand>
</feature>
<feature type="binding site" evidence="2">
    <location>
        <position position="262"/>
    </location>
    <ligand>
        <name>FAD</name>
        <dbReference type="ChEBI" id="CHEBI:57692"/>
    </ligand>
</feature>
<feature type="binding site" evidence="2">
    <location>
        <position position="265"/>
    </location>
    <ligand>
        <name>FAD</name>
        <dbReference type="ChEBI" id="CHEBI:57692"/>
    </ligand>
</feature>
<feature type="binding site" evidence="2">
    <location>
        <position position="301"/>
    </location>
    <ligand>
        <name>FAD</name>
        <dbReference type="ChEBI" id="CHEBI:57692"/>
    </ligand>
</feature>
<feature type="glycosylation site" description="N-linked (GlcNAc...) asparagine" evidence="3">
    <location>
        <position position="232"/>
    </location>
</feature>
<feature type="glycosylation site" description="N-linked (GlcNAc...) asparagine" evidence="3">
    <location>
        <position position="395"/>
    </location>
</feature>
<feature type="disulfide bond" evidence="2">
    <location>
        <begin position="44"/>
        <end position="57"/>
    </location>
</feature>
<feature type="disulfide bond" evidence="2">
    <location>
        <begin position="46"/>
        <end position="55"/>
    </location>
</feature>
<feature type="disulfide bond" evidence="2">
    <location>
        <begin position="94"/>
        <end position="402"/>
    </location>
</feature>
<feature type="disulfide bond" description="Redox-active" evidence="2">
    <location>
        <begin position="103"/>
        <end position="108"/>
    </location>
</feature>
<feature type="disulfide bond" evidence="2">
    <location>
        <begin position="227"/>
        <end position="251"/>
    </location>
</feature>
<feature type="disulfide bond" description="Redox-active" evidence="2">
    <location>
        <begin position="405"/>
        <end position="408"/>
    </location>
</feature>
<feature type="sequence conflict" description="In Ref. 1; AAF09172." evidence="4" ref="1">
    <original>D</original>
    <variation>Y</variation>
    <location>
        <position position="58"/>
    </location>
</feature>
<protein>
    <recommendedName>
        <fullName>Ero1-like protein</fullName>
        <ecNumber>1.8.4.-</ecNumber>
    </recommendedName>
    <alternativeName>
        <fullName>Endoplasmic reticulum oxidoreductin-1-like protein</fullName>
    </alternativeName>
</protein>
<proteinExistence type="evidence at transcript level"/>
<dbReference type="EC" id="1.8.4.-"/>
<dbReference type="EMBL" id="AF125280">
    <property type="protein sequence ID" value="AAF09172.1"/>
    <property type="status" value="ALT_INIT"/>
    <property type="molecule type" value="mRNA"/>
</dbReference>
<dbReference type="EMBL" id="AE014296">
    <property type="protein sequence ID" value="AAN11590.1"/>
    <property type="molecule type" value="Genomic_DNA"/>
</dbReference>
<dbReference type="EMBL" id="BT021422">
    <property type="protein sequence ID" value="AAX33570.1"/>
    <property type="molecule type" value="mRNA"/>
</dbReference>
<dbReference type="RefSeq" id="NP_647865.2">
    <property type="nucleotide sequence ID" value="NM_139608.4"/>
</dbReference>
<dbReference type="SMR" id="Q9V3A6"/>
<dbReference type="BioGRID" id="63978">
    <property type="interactions" value="4"/>
</dbReference>
<dbReference type="FunCoup" id="Q9V3A6">
    <property type="interactions" value="1563"/>
</dbReference>
<dbReference type="IntAct" id="Q9V3A6">
    <property type="interactions" value="1"/>
</dbReference>
<dbReference type="STRING" id="7227.FBpp0073073"/>
<dbReference type="GlyCosmos" id="Q9V3A6">
    <property type="glycosylation" value="2 sites, No reported glycans"/>
</dbReference>
<dbReference type="GlyGen" id="Q9V3A6">
    <property type="glycosylation" value="3 sites, 1 O-linked glycan (1 site)"/>
</dbReference>
<dbReference type="PaxDb" id="7227-FBpp0073073"/>
<dbReference type="DNASU" id="38500"/>
<dbReference type="EnsemblMetazoa" id="FBtr0073217">
    <property type="protein sequence ID" value="FBpp0073073"/>
    <property type="gene ID" value="FBgn0261274"/>
</dbReference>
<dbReference type="GeneID" id="38500"/>
<dbReference type="KEGG" id="dme:Dmel_CG1333"/>
<dbReference type="AGR" id="FB:FBgn0261274"/>
<dbReference type="CTD" id="38500"/>
<dbReference type="FlyBase" id="FBgn0261274">
    <property type="gene designation" value="Ero1L"/>
</dbReference>
<dbReference type="VEuPathDB" id="VectorBase:FBgn0261274"/>
<dbReference type="eggNOG" id="KOG2608">
    <property type="taxonomic scope" value="Eukaryota"/>
</dbReference>
<dbReference type="GeneTree" id="ENSGT00390000007753"/>
<dbReference type="HOGENOM" id="CLU_023061_2_2_1"/>
<dbReference type="InParanoid" id="Q9V3A6"/>
<dbReference type="OMA" id="CYKDRLH"/>
<dbReference type="OrthoDB" id="269384at2759"/>
<dbReference type="PhylomeDB" id="Q9V3A6"/>
<dbReference type="Reactome" id="R-DME-264876">
    <property type="pathway name" value="Insulin processing"/>
</dbReference>
<dbReference type="BioGRID-ORCS" id="38500">
    <property type="hits" value="1 hit in 3 CRISPR screens"/>
</dbReference>
<dbReference type="GenomeRNAi" id="38500"/>
<dbReference type="PRO" id="PR:Q9V3A6"/>
<dbReference type="Proteomes" id="UP000000803">
    <property type="component" value="Chromosome 3L"/>
</dbReference>
<dbReference type="Bgee" id="FBgn0261274">
    <property type="expression patterns" value="Expressed in saliva-secreting gland and 136 other cell types or tissues"/>
</dbReference>
<dbReference type="GO" id="GO:0005783">
    <property type="term" value="C:endoplasmic reticulum"/>
    <property type="evidence" value="ECO:0000250"/>
    <property type="project" value="UniProtKB"/>
</dbReference>
<dbReference type="GO" id="GO:0005789">
    <property type="term" value="C:endoplasmic reticulum membrane"/>
    <property type="evidence" value="ECO:0000318"/>
    <property type="project" value="GO_Central"/>
</dbReference>
<dbReference type="GO" id="GO:0071949">
    <property type="term" value="F:FAD binding"/>
    <property type="evidence" value="ECO:0007669"/>
    <property type="project" value="InterPro"/>
</dbReference>
<dbReference type="GO" id="GO:0015035">
    <property type="term" value="F:protein-disulfide reductase activity"/>
    <property type="evidence" value="ECO:0000318"/>
    <property type="project" value="GO_Central"/>
</dbReference>
<dbReference type="GO" id="GO:0016972">
    <property type="term" value="F:thiol oxidase activity"/>
    <property type="evidence" value="ECO:0000315"/>
    <property type="project" value="FlyBase"/>
</dbReference>
<dbReference type="GO" id="GO:0051085">
    <property type="term" value="P:chaperone cofactor-dependent protein refolding"/>
    <property type="evidence" value="ECO:0000250"/>
    <property type="project" value="UniProtKB"/>
</dbReference>
<dbReference type="GO" id="GO:0034975">
    <property type="term" value="P:protein folding in endoplasmic reticulum"/>
    <property type="evidence" value="ECO:0000315"/>
    <property type="project" value="FlyBase"/>
</dbReference>
<dbReference type="InterPro" id="IPR007266">
    <property type="entry name" value="Ero1"/>
</dbReference>
<dbReference type="InterPro" id="IPR037192">
    <property type="entry name" value="ERO1-like_sf"/>
</dbReference>
<dbReference type="PANTHER" id="PTHR12613:SF0">
    <property type="entry name" value="ERO1-LIKE PROTEIN"/>
    <property type="match status" value="1"/>
</dbReference>
<dbReference type="PANTHER" id="PTHR12613">
    <property type="entry name" value="ERO1-RELATED"/>
    <property type="match status" value="1"/>
</dbReference>
<dbReference type="Pfam" id="PF04137">
    <property type="entry name" value="ERO1"/>
    <property type="match status" value="1"/>
</dbReference>
<dbReference type="PIRSF" id="PIRSF017205">
    <property type="entry name" value="ERO1"/>
    <property type="match status" value="1"/>
</dbReference>
<dbReference type="SUPFAM" id="SSF110019">
    <property type="entry name" value="ERO1-like"/>
    <property type="match status" value="1"/>
</dbReference>
<sequence>MTTRTVQRNLWASAAVVLVLLLLWTDTTGGYFAAIDETETSKNCFCELEGSINDCSCDVDTVDHFNNMKIYPRLQSLLVKNFFRFYKVNLRQECPFWPDDSRCAMRFCQVENCEEQAIPQGIKDKGEHKEKAAFKYTREAQVGGSACSDGEDFDSSLGFLDTSISDQAHREFELWAKHDEAEEDFCIVDDHEEGSQYVDLLLNPERYTGYKGESAHRIWKSIYLENCFGGNNETANKFSNYVPHLDLRNVCLEQRAFYRIISGLHSSINIHLCSKYLLSESKDFLDPQGIWGPNVKEFKRRFSPETTSGEGPHWLRNLYFIYLIELRALAKAAPYLRREDYYTGIAEEDDEVKLAINDMLSVIENFQSHFDENALFSNGIASIKFKHDYKEKFRNISRIMSCVGCDKCKLWGKLQTQGLGTALKILYSEKLNLATESGLWDKPHIEADPIFRLSRTEIVALFNAFGRLSNSIYEMENFRCVLR</sequence>
<keyword id="KW-1015">Disulfide bond</keyword>
<keyword id="KW-0249">Electron transport</keyword>
<keyword id="KW-0256">Endoplasmic reticulum</keyword>
<keyword id="KW-0274">FAD</keyword>
<keyword id="KW-0285">Flavoprotein</keyword>
<keyword id="KW-0325">Glycoprotein</keyword>
<keyword id="KW-0472">Membrane</keyword>
<keyword id="KW-0560">Oxidoreductase</keyword>
<keyword id="KW-0676">Redox-active center</keyword>
<keyword id="KW-1185">Reference proteome</keyword>
<keyword id="KW-0732">Signal</keyword>
<keyword id="KW-0813">Transport</keyword>
<comment type="function">
    <text evidence="1">Oxidoreductase involved in disulfide bond formation in the endoplasmic reticulum. Efficiently reoxidizes pdi-1, the enzyme catalyzing protein disulfide formation, in order to allow pdi-1 to sustain additional rounds of disulfide formation. Following pdi reoxidation, passes its electrons to molecular oxygen via FAD, leading to the production of reactive oxygen species (ROS) in the cell (By similarity).</text>
</comment>
<comment type="cofactor">
    <cofactor evidence="2">
        <name>FAD</name>
        <dbReference type="ChEBI" id="CHEBI:57692"/>
    </cofactor>
</comment>
<comment type="subunit">
    <text evidence="1">May function both as a monomer and a homodimer.</text>
</comment>
<comment type="subcellular location">
    <subcellularLocation>
        <location evidence="1">Endoplasmic reticulum membrane</location>
        <topology evidence="1">Peripheral membrane protein</topology>
        <orientation evidence="1">Lumenal side</orientation>
    </subcellularLocation>
</comment>
<comment type="similarity">
    <text evidence="4">Belongs to the EROs family.</text>
</comment>
<comment type="sequence caution" evidence="4">
    <conflict type="erroneous initiation">
        <sequence resource="EMBL-CDS" id="AAF09172"/>
    </conflict>
</comment>
<organism>
    <name type="scientific">Drosophila melanogaster</name>
    <name type="common">Fruit fly</name>
    <dbReference type="NCBI Taxonomy" id="7227"/>
    <lineage>
        <taxon>Eukaryota</taxon>
        <taxon>Metazoa</taxon>
        <taxon>Ecdysozoa</taxon>
        <taxon>Arthropoda</taxon>
        <taxon>Hexapoda</taxon>
        <taxon>Insecta</taxon>
        <taxon>Pterygota</taxon>
        <taxon>Neoptera</taxon>
        <taxon>Endopterygota</taxon>
        <taxon>Diptera</taxon>
        <taxon>Brachycera</taxon>
        <taxon>Muscomorpha</taxon>
        <taxon>Ephydroidea</taxon>
        <taxon>Drosophilidae</taxon>
        <taxon>Drosophila</taxon>
        <taxon>Sophophora</taxon>
    </lineage>
</organism>
<name>ERO1L_DROME</name>
<gene>
    <name type="primary">Ero1L</name>
    <name type="ORF">CG1333</name>
</gene>
<accession>Q9V3A6</accession>
<accession>E2QCT2</accession>
<accession>Q5BI02</accession>
<accession>Q7KNC7</accession>
<reference key="1">
    <citation type="journal article" date="2000" name="J. Biol. Chem.">
        <title>ERO1-L, a human protein that favors disulfide bond formation in the endoplasmic reticulum.</title>
        <authorList>
            <person name="Cabibbo A."/>
            <person name="Pagani M."/>
            <person name="Fabbri M."/>
            <person name="Rocchi M."/>
            <person name="Farmery M.R."/>
            <person name="Bulleid N.J."/>
            <person name="Sitia R."/>
        </authorList>
    </citation>
    <scope>NUCLEOTIDE SEQUENCE [MRNA]</scope>
</reference>
<reference key="2">
    <citation type="journal article" date="2000" name="Science">
        <title>The genome sequence of Drosophila melanogaster.</title>
        <authorList>
            <person name="Adams M.D."/>
            <person name="Celniker S.E."/>
            <person name="Holt R.A."/>
            <person name="Evans C.A."/>
            <person name="Gocayne J.D."/>
            <person name="Amanatides P.G."/>
            <person name="Scherer S.E."/>
            <person name="Li P.W."/>
            <person name="Hoskins R.A."/>
            <person name="Galle R.F."/>
            <person name="George R.A."/>
            <person name="Lewis S.E."/>
            <person name="Richards S."/>
            <person name="Ashburner M."/>
            <person name="Henderson S.N."/>
            <person name="Sutton G.G."/>
            <person name="Wortman J.R."/>
            <person name="Yandell M.D."/>
            <person name="Zhang Q."/>
            <person name="Chen L.X."/>
            <person name="Brandon R.C."/>
            <person name="Rogers Y.-H.C."/>
            <person name="Blazej R.G."/>
            <person name="Champe M."/>
            <person name="Pfeiffer B.D."/>
            <person name="Wan K.H."/>
            <person name="Doyle C."/>
            <person name="Baxter E.G."/>
            <person name="Helt G."/>
            <person name="Nelson C.R."/>
            <person name="Miklos G.L.G."/>
            <person name="Abril J.F."/>
            <person name="Agbayani A."/>
            <person name="An H.-J."/>
            <person name="Andrews-Pfannkoch C."/>
            <person name="Baldwin D."/>
            <person name="Ballew R.M."/>
            <person name="Basu A."/>
            <person name="Baxendale J."/>
            <person name="Bayraktaroglu L."/>
            <person name="Beasley E.M."/>
            <person name="Beeson K.Y."/>
            <person name="Benos P.V."/>
            <person name="Berman B.P."/>
            <person name="Bhandari D."/>
            <person name="Bolshakov S."/>
            <person name="Borkova D."/>
            <person name="Botchan M.R."/>
            <person name="Bouck J."/>
            <person name="Brokstein P."/>
            <person name="Brottier P."/>
            <person name="Burtis K.C."/>
            <person name="Busam D.A."/>
            <person name="Butler H."/>
            <person name="Cadieu E."/>
            <person name="Center A."/>
            <person name="Chandra I."/>
            <person name="Cherry J.M."/>
            <person name="Cawley S."/>
            <person name="Dahlke C."/>
            <person name="Davenport L.B."/>
            <person name="Davies P."/>
            <person name="de Pablos B."/>
            <person name="Delcher A."/>
            <person name="Deng Z."/>
            <person name="Mays A.D."/>
            <person name="Dew I."/>
            <person name="Dietz S.M."/>
            <person name="Dodson K."/>
            <person name="Doup L.E."/>
            <person name="Downes M."/>
            <person name="Dugan-Rocha S."/>
            <person name="Dunkov B.C."/>
            <person name="Dunn P."/>
            <person name="Durbin K.J."/>
            <person name="Evangelista C.C."/>
            <person name="Ferraz C."/>
            <person name="Ferriera S."/>
            <person name="Fleischmann W."/>
            <person name="Fosler C."/>
            <person name="Gabrielian A.E."/>
            <person name="Garg N.S."/>
            <person name="Gelbart W.M."/>
            <person name="Glasser K."/>
            <person name="Glodek A."/>
            <person name="Gong F."/>
            <person name="Gorrell J.H."/>
            <person name="Gu Z."/>
            <person name="Guan P."/>
            <person name="Harris M."/>
            <person name="Harris N.L."/>
            <person name="Harvey D.A."/>
            <person name="Heiman T.J."/>
            <person name="Hernandez J.R."/>
            <person name="Houck J."/>
            <person name="Hostin D."/>
            <person name="Houston K.A."/>
            <person name="Howland T.J."/>
            <person name="Wei M.-H."/>
            <person name="Ibegwam C."/>
            <person name="Jalali M."/>
            <person name="Kalush F."/>
            <person name="Karpen G.H."/>
            <person name="Ke Z."/>
            <person name="Kennison J.A."/>
            <person name="Ketchum K.A."/>
            <person name="Kimmel B.E."/>
            <person name="Kodira C.D."/>
            <person name="Kraft C.L."/>
            <person name="Kravitz S."/>
            <person name="Kulp D."/>
            <person name="Lai Z."/>
            <person name="Lasko P."/>
            <person name="Lei Y."/>
            <person name="Levitsky A.A."/>
            <person name="Li J.H."/>
            <person name="Li Z."/>
            <person name="Liang Y."/>
            <person name="Lin X."/>
            <person name="Liu X."/>
            <person name="Mattei B."/>
            <person name="McIntosh T.C."/>
            <person name="McLeod M.P."/>
            <person name="McPherson D."/>
            <person name="Merkulov G."/>
            <person name="Milshina N.V."/>
            <person name="Mobarry C."/>
            <person name="Morris J."/>
            <person name="Moshrefi A."/>
            <person name="Mount S.M."/>
            <person name="Moy M."/>
            <person name="Murphy B."/>
            <person name="Murphy L."/>
            <person name="Muzny D.M."/>
            <person name="Nelson D.L."/>
            <person name="Nelson D.R."/>
            <person name="Nelson K.A."/>
            <person name="Nixon K."/>
            <person name="Nusskern D.R."/>
            <person name="Pacleb J.M."/>
            <person name="Palazzolo M."/>
            <person name="Pittman G.S."/>
            <person name="Pan S."/>
            <person name="Pollard J."/>
            <person name="Puri V."/>
            <person name="Reese M.G."/>
            <person name="Reinert K."/>
            <person name="Remington K."/>
            <person name="Saunders R.D.C."/>
            <person name="Scheeler F."/>
            <person name="Shen H."/>
            <person name="Shue B.C."/>
            <person name="Siden-Kiamos I."/>
            <person name="Simpson M."/>
            <person name="Skupski M.P."/>
            <person name="Smith T.J."/>
            <person name="Spier E."/>
            <person name="Spradling A.C."/>
            <person name="Stapleton M."/>
            <person name="Strong R."/>
            <person name="Sun E."/>
            <person name="Svirskas R."/>
            <person name="Tector C."/>
            <person name="Turner R."/>
            <person name="Venter E."/>
            <person name="Wang A.H."/>
            <person name="Wang X."/>
            <person name="Wang Z.-Y."/>
            <person name="Wassarman D.A."/>
            <person name="Weinstock G.M."/>
            <person name="Weissenbach J."/>
            <person name="Williams S.M."/>
            <person name="Woodage T."/>
            <person name="Worley K.C."/>
            <person name="Wu D."/>
            <person name="Yang S."/>
            <person name="Yao Q.A."/>
            <person name="Ye J."/>
            <person name="Yeh R.-F."/>
            <person name="Zaveri J.S."/>
            <person name="Zhan M."/>
            <person name="Zhang G."/>
            <person name="Zhao Q."/>
            <person name="Zheng L."/>
            <person name="Zheng X.H."/>
            <person name="Zhong F.N."/>
            <person name="Zhong W."/>
            <person name="Zhou X."/>
            <person name="Zhu S.C."/>
            <person name="Zhu X."/>
            <person name="Smith H.O."/>
            <person name="Gibbs R.A."/>
            <person name="Myers E.W."/>
            <person name="Rubin G.M."/>
            <person name="Venter J.C."/>
        </authorList>
    </citation>
    <scope>NUCLEOTIDE SEQUENCE [LARGE SCALE GENOMIC DNA]</scope>
    <source>
        <strain>Berkeley</strain>
    </source>
</reference>
<reference key="3">
    <citation type="journal article" date="2002" name="Genome Biol.">
        <title>Annotation of the Drosophila melanogaster euchromatic genome: a systematic review.</title>
        <authorList>
            <person name="Misra S."/>
            <person name="Crosby M.A."/>
            <person name="Mungall C.J."/>
            <person name="Matthews B.B."/>
            <person name="Campbell K.S."/>
            <person name="Hradecky P."/>
            <person name="Huang Y."/>
            <person name="Kaminker J.S."/>
            <person name="Millburn G.H."/>
            <person name="Prochnik S.E."/>
            <person name="Smith C.D."/>
            <person name="Tupy J.L."/>
            <person name="Whitfield E.J."/>
            <person name="Bayraktaroglu L."/>
            <person name="Berman B.P."/>
            <person name="Bettencourt B.R."/>
            <person name="Celniker S.E."/>
            <person name="de Grey A.D.N.J."/>
            <person name="Drysdale R.A."/>
            <person name="Harris N.L."/>
            <person name="Richter J."/>
            <person name="Russo S."/>
            <person name="Schroeder A.J."/>
            <person name="Shu S.Q."/>
            <person name="Stapleton M."/>
            <person name="Yamada C."/>
            <person name="Ashburner M."/>
            <person name="Gelbart W.M."/>
            <person name="Rubin G.M."/>
            <person name="Lewis S.E."/>
        </authorList>
    </citation>
    <scope>GENOME REANNOTATION</scope>
    <source>
        <strain>Berkeley</strain>
    </source>
</reference>
<reference key="4">
    <citation type="submission" date="2005-03" db="EMBL/GenBank/DDBJ databases">
        <authorList>
            <person name="Stapleton M."/>
            <person name="Carlson J.W."/>
            <person name="Chavez C."/>
            <person name="Frise E."/>
            <person name="George R.A."/>
            <person name="Pacleb J.M."/>
            <person name="Park S."/>
            <person name="Wan K.H."/>
            <person name="Yu C."/>
            <person name="Rubin G.M."/>
            <person name="Celniker S.E."/>
        </authorList>
    </citation>
    <scope>NUCLEOTIDE SEQUENCE [LARGE SCALE MRNA]</scope>
    <source>
        <strain>Berkeley</strain>
        <tissue>Embryo</tissue>
    </source>
</reference>
<evidence type="ECO:0000250" key="1"/>
<evidence type="ECO:0000250" key="2">
    <source>
        <dbReference type="UniProtKB" id="Q96HE7"/>
    </source>
</evidence>
<evidence type="ECO:0000255" key="3"/>
<evidence type="ECO:0000305" key="4"/>